<keyword id="KW-0963">Cytoplasm</keyword>
<keyword id="KW-0312">Gluconeogenesis</keyword>
<keyword id="KW-0324">Glycolysis</keyword>
<keyword id="KW-0413">Isomerase</keyword>
<feature type="chain" id="PRO_0000307479" description="Triosephosphate isomerase">
    <location>
        <begin position="1"/>
        <end position="234"/>
    </location>
</feature>
<feature type="active site" description="Electrophile" evidence="1">
    <location>
        <position position="90"/>
    </location>
</feature>
<feature type="active site" description="Proton acceptor" evidence="1">
    <location>
        <position position="159"/>
    </location>
</feature>
<feature type="binding site" evidence="1">
    <location>
        <begin position="8"/>
        <end position="10"/>
    </location>
    <ligand>
        <name>substrate</name>
    </ligand>
</feature>
<feature type="binding site" evidence="1">
    <location>
        <position position="165"/>
    </location>
    <ligand>
        <name>substrate</name>
    </ligand>
</feature>
<feature type="binding site" evidence="1">
    <location>
        <position position="197"/>
    </location>
    <ligand>
        <name>substrate</name>
    </ligand>
</feature>
<name>TPIS_HELAH</name>
<dbReference type="EC" id="5.3.1.1" evidence="1"/>
<dbReference type="EMBL" id="AM260522">
    <property type="protein sequence ID" value="CAJ99216.1"/>
    <property type="molecule type" value="Genomic_DNA"/>
</dbReference>
<dbReference type="RefSeq" id="WP_011577331.1">
    <property type="nucleotide sequence ID" value="NC_008229.1"/>
</dbReference>
<dbReference type="SMR" id="Q17YR0"/>
<dbReference type="STRING" id="382638.Hac_0379"/>
<dbReference type="GeneID" id="31757887"/>
<dbReference type="KEGG" id="hac:Hac_0379"/>
<dbReference type="eggNOG" id="COG0149">
    <property type="taxonomic scope" value="Bacteria"/>
</dbReference>
<dbReference type="HOGENOM" id="CLU_024251_2_3_7"/>
<dbReference type="OrthoDB" id="9809429at2"/>
<dbReference type="BioCyc" id="HACI382638:HAC_RS01715-MONOMER"/>
<dbReference type="UniPathway" id="UPA00109">
    <property type="reaction ID" value="UER00189"/>
</dbReference>
<dbReference type="UniPathway" id="UPA00138"/>
<dbReference type="Proteomes" id="UP000000775">
    <property type="component" value="Chromosome"/>
</dbReference>
<dbReference type="GO" id="GO:0005829">
    <property type="term" value="C:cytosol"/>
    <property type="evidence" value="ECO:0007669"/>
    <property type="project" value="TreeGrafter"/>
</dbReference>
<dbReference type="GO" id="GO:0004807">
    <property type="term" value="F:triose-phosphate isomerase activity"/>
    <property type="evidence" value="ECO:0007669"/>
    <property type="project" value="UniProtKB-UniRule"/>
</dbReference>
<dbReference type="GO" id="GO:0006094">
    <property type="term" value="P:gluconeogenesis"/>
    <property type="evidence" value="ECO:0007669"/>
    <property type="project" value="UniProtKB-UniRule"/>
</dbReference>
<dbReference type="GO" id="GO:0046166">
    <property type="term" value="P:glyceraldehyde-3-phosphate biosynthetic process"/>
    <property type="evidence" value="ECO:0007669"/>
    <property type="project" value="TreeGrafter"/>
</dbReference>
<dbReference type="GO" id="GO:0019563">
    <property type="term" value="P:glycerol catabolic process"/>
    <property type="evidence" value="ECO:0007669"/>
    <property type="project" value="TreeGrafter"/>
</dbReference>
<dbReference type="GO" id="GO:0006096">
    <property type="term" value="P:glycolytic process"/>
    <property type="evidence" value="ECO:0007669"/>
    <property type="project" value="UniProtKB-UniRule"/>
</dbReference>
<dbReference type="CDD" id="cd00311">
    <property type="entry name" value="TIM"/>
    <property type="match status" value="1"/>
</dbReference>
<dbReference type="Gene3D" id="3.20.20.70">
    <property type="entry name" value="Aldolase class I"/>
    <property type="match status" value="1"/>
</dbReference>
<dbReference type="HAMAP" id="MF_00147_B">
    <property type="entry name" value="TIM_B"/>
    <property type="match status" value="1"/>
</dbReference>
<dbReference type="InterPro" id="IPR013785">
    <property type="entry name" value="Aldolase_TIM"/>
</dbReference>
<dbReference type="InterPro" id="IPR035990">
    <property type="entry name" value="TIM_sf"/>
</dbReference>
<dbReference type="InterPro" id="IPR022896">
    <property type="entry name" value="TrioseP_Isoase_bac/euk"/>
</dbReference>
<dbReference type="InterPro" id="IPR000652">
    <property type="entry name" value="Triosephosphate_isomerase"/>
</dbReference>
<dbReference type="InterPro" id="IPR020861">
    <property type="entry name" value="Triosephosphate_isomerase_AS"/>
</dbReference>
<dbReference type="NCBIfam" id="NF000728">
    <property type="entry name" value="PRK00042.3-2"/>
    <property type="match status" value="1"/>
</dbReference>
<dbReference type="NCBIfam" id="NF000729">
    <property type="entry name" value="PRK00042.3-3"/>
    <property type="match status" value="1"/>
</dbReference>
<dbReference type="PANTHER" id="PTHR21139">
    <property type="entry name" value="TRIOSEPHOSPHATE ISOMERASE"/>
    <property type="match status" value="1"/>
</dbReference>
<dbReference type="PANTHER" id="PTHR21139:SF42">
    <property type="entry name" value="TRIOSEPHOSPHATE ISOMERASE"/>
    <property type="match status" value="1"/>
</dbReference>
<dbReference type="Pfam" id="PF00121">
    <property type="entry name" value="TIM"/>
    <property type="match status" value="1"/>
</dbReference>
<dbReference type="SUPFAM" id="SSF51351">
    <property type="entry name" value="Triosephosphate isomerase (TIM)"/>
    <property type="match status" value="1"/>
</dbReference>
<dbReference type="PROSITE" id="PS00171">
    <property type="entry name" value="TIM_1"/>
    <property type="match status" value="1"/>
</dbReference>
<dbReference type="PROSITE" id="PS51440">
    <property type="entry name" value="TIM_2"/>
    <property type="match status" value="1"/>
</dbReference>
<sequence length="234" mass="26551">MTKIAMANFKSAMPIFKSHAYLKELEKTLKPQHCDRVFVFPDFLGLLPNAFLHFTLGVQNAYPKDCGAFTGEITSKHLEELKINTLLIGHSERRVLLKESPNFLKEKFDFFKDKKFKIVYCIGEDLKTREKGLGAVKEFLNEQLENIDLDYQNLIVAYEPIWAIGTGKSASLEDIYLTHGFLKQHLNQKMPLLYGGSVNTQNAKEILGIDSVDGLLIGSTSLELENFKTIISFL</sequence>
<accession>Q17YR0</accession>
<comment type="function">
    <text evidence="1">Involved in the gluconeogenesis. Catalyzes stereospecifically the conversion of dihydroxyacetone phosphate (DHAP) to D-glyceraldehyde-3-phosphate (G3P).</text>
</comment>
<comment type="catalytic activity">
    <reaction evidence="1">
        <text>D-glyceraldehyde 3-phosphate = dihydroxyacetone phosphate</text>
        <dbReference type="Rhea" id="RHEA:18585"/>
        <dbReference type="ChEBI" id="CHEBI:57642"/>
        <dbReference type="ChEBI" id="CHEBI:59776"/>
        <dbReference type="EC" id="5.3.1.1"/>
    </reaction>
</comment>
<comment type="pathway">
    <text evidence="1">Carbohydrate biosynthesis; gluconeogenesis.</text>
</comment>
<comment type="pathway">
    <text evidence="1">Carbohydrate degradation; glycolysis; D-glyceraldehyde 3-phosphate from glycerone phosphate: step 1/1.</text>
</comment>
<comment type="subunit">
    <text evidence="1">Homodimer.</text>
</comment>
<comment type="subcellular location">
    <subcellularLocation>
        <location evidence="1">Cytoplasm</location>
    </subcellularLocation>
</comment>
<comment type="similarity">
    <text evidence="1">Belongs to the triosephosphate isomerase family.</text>
</comment>
<gene>
    <name evidence="1" type="primary">tpiA</name>
    <name type="ordered locus">Hac_0379</name>
</gene>
<organism>
    <name type="scientific">Helicobacter acinonychis (strain Sheeba)</name>
    <dbReference type="NCBI Taxonomy" id="382638"/>
    <lineage>
        <taxon>Bacteria</taxon>
        <taxon>Pseudomonadati</taxon>
        <taxon>Campylobacterota</taxon>
        <taxon>Epsilonproteobacteria</taxon>
        <taxon>Campylobacterales</taxon>
        <taxon>Helicobacteraceae</taxon>
        <taxon>Helicobacter</taxon>
    </lineage>
</organism>
<evidence type="ECO:0000255" key="1">
    <source>
        <dbReference type="HAMAP-Rule" id="MF_00147"/>
    </source>
</evidence>
<protein>
    <recommendedName>
        <fullName evidence="1">Triosephosphate isomerase</fullName>
        <shortName evidence="1">TIM</shortName>
        <shortName evidence="1">TPI</shortName>
        <ecNumber evidence="1">5.3.1.1</ecNumber>
    </recommendedName>
    <alternativeName>
        <fullName evidence="1">Triose-phosphate isomerase</fullName>
    </alternativeName>
</protein>
<reference key="1">
    <citation type="journal article" date="2006" name="PLoS Genet.">
        <title>Who ate whom? Adaptive Helicobacter genomic changes that accompanied a host jump from early humans to large felines.</title>
        <authorList>
            <person name="Eppinger M."/>
            <person name="Baar C."/>
            <person name="Linz B."/>
            <person name="Raddatz G."/>
            <person name="Lanz C."/>
            <person name="Keller H."/>
            <person name="Morelli G."/>
            <person name="Gressmann H."/>
            <person name="Achtman M."/>
            <person name="Schuster S.C."/>
        </authorList>
    </citation>
    <scope>NUCLEOTIDE SEQUENCE [LARGE SCALE GENOMIC DNA]</scope>
    <source>
        <strain>Sheeba</strain>
    </source>
</reference>
<proteinExistence type="inferred from homology"/>